<keyword id="KW-1185">Reference proteome</keyword>
<keyword id="KW-0687">Ribonucleoprotein</keyword>
<keyword id="KW-0689">Ribosomal protein</keyword>
<keyword id="KW-0694">RNA-binding</keyword>
<keyword id="KW-0699">rRNA-binding</keyword>
<keyword id="KW-0820">tRNA-binding</keyword>
<feature type="chain" id="PRO_0000243081" description="Large ribosomal subunit protein uL5">
    <location>
        <begin position="1"/>
        <end position="179"/>
    </location>
</feature>
<proteinExistence type="inferred from homology"/>
<comment type="function">
    <text evidence="1">This is one of the proteins that bind and probably mediate the attachment of the 5S RNA into the large ribosomal subunit, where it forms part of the central protuberance. In the 70S ribosome it contacts protein S13 of the 30S subunit (bridge B1b), connecting the 2 subunits; this bridge is implicated in subunit movement. Contacts the P site tRNA; the 5S rRNA and some of its associated proteins might help stabilize positioning of ribosome-bound tRNAs.</text>
</comment>
<comment type="subunit">
    <text evidence="1">Part of the 50S ribosomal subunit; part of the 5S rRNA/L5/L18/L25 subcomplex. Contacts the 5S rRNA and the P site tRNA. Forms a bridge to the 30S subunit in the 70S ribosome.</text>
</comment>
<comment type="similarity">
    <text evidence="1">Belongs to the universal ribosomal protein uL5 family.</text>
</comment>
<name>RL5_THIDA</name>
<sequence>MARFQEFYRETVVPKLIEQFGYKSVMEVPRIQKITLNMGVGEAVADKKVMDHAVADMQKIAGQKPVVTKSKKSIAGFKIRENYPVGCMVTLRRGQMYEFLDRLVTVALPRVRDFRGVSGKSFDGRGNYNMGIKEQIIFPEIEYDKIDALRGMNITITTTAKTDDEARALLAAFSFPFKN</sequence>
<accession>Q3SLN7</accession>
<protein>
    <recommendedName>
        <fullName evidence="1">Large ribosomal subunit protein uL5</fullName>
    </recommendedName>
    <alternativeName>
        <fullName evidence="2">50S ribosomal protein L5</fullName>
    </alternativeName>
</protein>
<evidence type="ECO:0000255" key="1">
    <source>
        <dbReference type="HAMAP-Rule" id="MF_01333"/>
    </source>
</evidence>
<evidence type="ECO:0000305" key="2"/>
<gene>
    <name evidence="1" type="primary">rplE</name>
    <name type="ordered locus">Tbd_0417</name>
</gene>
<organism>
    <name type="scientific">Thiobacillus denitrificans (strain ATCC 25259 / T1)</name>
    <dbReference type="NCBI Taxonomy" id="292415"/>
    <lineage>
        <taxon>Bacteria</taxon>
        <taxon>Pseudomonadati</taxon>
        <taxon>Pseudomonadota</taxon>
        <taxon>Betaproteobacteria</taxon>
        <taxon>Nitrosomonadales</taxon>
        <taxon>Thiobacillaceae</taxon>
        <taxon>Thiobacillus</taxon>
    </lineage>
</organism>
<dbReference type="EMBL" id="CP000116">
    <property type="protein sequence ID" value="AAZ96370.1"/>
    <property type="molecule type" value="Genomic_DNA"/>
</dbReference>
<dbReference type="RefSeq" id="WP_011310929.1">
    <property type="nucleotide sequence ID" value="NC_007404.1"/>
</dbReference>
<dbReference type="SMR" id="Q3SLN7"/>
<dbReference type="STRING" id="292415.Tbd_0417"/>
<dbReference type="KEGG" id="tbd:Tbd_0417"/>
<dbReference type="eggNOG" id="COG0094">
    <property type="taxonomic scope" value="Bacteria"/>
</dbReference>
<dbReference type="HOGENOM" id="CLU_061015_2_1_4"/>
<dbReference type="OrthoDB" id="9806626at2"/>
<dbReference type="Proteomes" id="UP000008291">
    <property type="component" value="Chromosome"/>
</dbReference>
<dbReference type="GO" id="GO:1990904">
    <property type="term" value="C:ribonucleoprotein complex"/>
    <property type="evidence" value="ECO:0007669"/>
    <property type="project" value="UniProtKB-KW"/>
</dbReference>
<dbReference type="GO" id="GO:0005840">
    <property type="term" value="C:ribosome"/>
    <property type="evidence" value="ECO:0007669"/>
    <property type="project" value="UniProtKB-KW"/>
</dbReference>
<dbReference type="GO" id="GO:0019843">
    <property type="term" value="F:rRNA binding"/>
    <property type="evidence" value="ECO:0007669"/>
    <property type="project" value="UniProtKB-UniRule"/>
</dbReference>
<dbReference type="GO" id="GO:0003735">
    <property type="term" value="F:structural constituent of ribosome"/>
    <property type="evidence" value="ECO:0007669"/>
    <property type="project" value="InterPro"/>
</dbReference>
<dbReference type="GO" id="GO:0000049">
    <property type="term" value="F:tRNA binding"/>
    <property type="evidence" value="ECO:0007669"/>
    <property type="project" value="UniProtKB-UniRule"/>
</dbReference>
<dbReference type="GO" id="GO:0006412">
    <property type="term" value="P:translation"/>
    <property type="evidence" value="ECO:0007669"/>
    <property type="project" value="UniProtKB-UniRule"/>
</dbReference>
<dbReference type="FunFam" id="3.30.1440.10:FF:000001">
    <property type="entry name" value="50S ribosomal protein L5"/>
    <property type="match status" value="1"/>
</dbReference>
<dbReference type="Gene3D" id="3.30.1440.10">
    <property type="match status" value="1"/>
</dbReference>
<dbReference type="HAMAP" id="MF_01333_B">
    <property type="entry name" value="Ribosomal_uL5_B"/>
    <property type="match status" value="1"/>
</dbReference>
<dbReference type="InterPro" id="IPR002132">
    <property type="entry name" value="Ribosomal_uL5"/>
</dbReference>
<dbReference type="InterPro" id="IPR020930">
    <property type="entry name" value="Ribosomal_uL5_bac-type"/>
</dbReference>
<dbReference type="InterPro" id="IPR031309">
    <property type="entry name" value="Ribosomal_uL5_C"/>
</dbReference>
<dbReference type="InterPro" id="IPR020929">
    <property type="entry name" value="Ribosomal_uL5_CS"/>
</dbReference>
<dbReference type="InterPro" id="IPR022803">
    <property type="entry name" value="Ribosomal_uL5_dom_sf"/>
</dbReference>
<dbReference type="InterPro" id="IPR031310">
    <property type="entry name" value="Ribosomal_uL5_N"/>
</dbReference>
<dbReference type="NCBIfam" id="NF000585">
    <property type="entry name" value="PRK00010.1"/>
    <property type="match status" value="1"/>
</dbReference>
<dbReference type="PANTHER" id="PTHR11994">
    <property type="entry name" value="60S RIBOSOMAL PROTEIN L11-RELATED"/>
    <property type="match status" value="1"/>
</dbReference>
<dbReference type="Pfam" id="PF00281">
    <property type="entry name" value="Ribosomal_L5"/>
    <property type="match status" value="1"/>
</dbReference>
<dbReference type="Pfam" id="PF00673">
    <property type="entry name" value="Ribosomal_L5_C"/>
    <property type="match status" value="1"/>
</dbReference>
<dbReference type="PIRSF" id="PIRSF002161">
    <property type="entry name" value="Ribosomal_L5"/>
    <property type="match status" value="1"/>
</dbReference>
<dbReference type="SUPFAM" id="SSF55282">
    <property type="entry name" value="RL5-like"/>
    <property type="match status" value="1"/>
</dbReference>
<dbReference type="PROSITE" id="PS00358">
    <property type="entry name" value="RIBOSOMAL_L5"/>
    <property type="match status" value="1"/>
</dbReference>
<reference key="1">
    <citation type="journal article" date="2006" name="J. Bacteriol.">
        <title>The genome sequence of the obligately chemolithoautotrophic, facultatively anaerobic bacterium Thiobacillus denitrificans.</title>
        <authorList>
            <person name="Beller H.R."/>
            <person name="Chain P.S."/>
            <person name="Letain T.E."/>
            <person name="Chakicherla A."/>
            <person name="Larimer F.W."/>
            <person name="Richardson P.M."/>
            <person name="Coleman M.A."/>
            <person name="Wood A.P."/>
            <person name="Kelly D.P."/>
        </authorList>
    </citation>
    <scope>NUCLEOTIDE SEQUENCE [LARGE SCALE GENOMIC DNA]</scope>
    <source>
        <strain>ATCC 25259 / T1</strain>
    </source>
</reference>